<keyword id="KW-0001">2Fe-2S</keyword>
<keyword id="KW-0963">Cytoplasm</keyword>
<keyword id="KW-0408">Iron</keyword>
<keyword id="KW-0411">Iron-sulfur</keyword>
<keyword id="KW-0479">Metal-binding</keyword>
<keyword id="KW-0663">Pyridoxal phosphate</keyword>
<keyword id="KW-1185">Reference proteome</keyword>
<keyword id="KW-0808">Transferase</keyword>
<feature type="chain" id="PRO_1000079214" description="Cysteine desulfurase IscS">
    <location>
        <begin position="1"/>
        <end position="404"/>
    </location>
</feature>
<feature type="active site" description="Cysteine persulfide intermediate" evidence="1">
    <location>
        <position position="328"/>
    </location>
</feature>
<feature type="binding site" evidence="1">
    <location>
        <begin position="75"/>
        <end position="76"/>
    </location>
    <ligand>
        <name>pyridoxal 5'-phosphate</name>
        <dbReference type="ChEBI" id="CHEBI:597326"/>
    </ligand>
</feature>
<feature type="binding site" evidence="1">
    <location>
        <position position="155"/>
    </location>
    <ligand>
        <name>pyridoxal 5'-phosphate</name>
        <dbReference type="ChEBI" id="CHEBI:597326"/>
    </ligand>
</feature>
<feature type="binding site" evidence="1">
    <location>
        <position position="183"/>
    </location>
    <ligand>
        <name>pyridoxal 5'-phosphate</name>
        <dbReference type="ChEBI" id="CHEBI:597326"/>
    </ligand>
</feature>
<feature type="binding site" evidence="1">
    <location>
        <begin position="203"/>
        <end position="205"/>
    </location>
    <ligand>
        <name>pyridoxal 5'-phosphate</name>
        <dbReference type="ChEBI" id="CHEBI:597326"/>
    </ligand>
</feature>
<feature type="binding site" evidence="1">
    <location>
        <position position="243"/>
    </location>
    <ligand>
        <name>pyridoxal 5'-phosphate</name>
        <dbReference type="ChEBI" id="CHEBI:597326"/>
    </ligand>
</feature>
<feature type="binding site" description="via persulfide group" evidence="1">
    <location>
        <position position="328"/>
    </location>
    <ligand>
        <name>[2Fe-2S] cluster</name>
        <dbReference type="ChEBI" id="CHEBI:190135"/>
        <note>ligand shared with IscU</note>
    </ligand>
</feature>
<feature type="modified residue" description="N6-(pyridoxal phosphate)lysine" evidence="1">
    <location>
        <position position="206"/>
    </location>
</feature>
<name>ISCS_SHESH</name>
<gene>
    <name evidence="1" type="primary">iscS</name>
    <name type="ordered locus">Ssed_2871</name>
</gene>
<accession>A8FXA5</accession>
<evidence type="ECO:0000255" key="1">
    <source>
        <dbReference type="HAMAP-Rule" id="MF_00331"/>
    </source>
</evidence>
<organism>
    <name type="scientific">Shewanella sediminis (strain HAW-EB3)</name>
    <dbReference type="NCBI Taxonomy" id="425104"/>
    <lineage>
        <taxon>Bacteria</taxon>
        <taxon>Pseudomonadati</taxon>
        <taxon>Pseudomonadota</taxon>
        <taxon>Gammaproteobacteria</taxon>
        <taxon>Alteromonadales</taxon>
        <taxon>Shewanellaceae</taxon>
        <taxon>Shewanella</taxon>
    </lineage>
</organism>
<protein>
    <recommendedName>
        <fullName evidence="1">Cysteine desulfurase IscS</fullName>
        <ecNumber evidence="1">2.8.1.7</ecNumber>
    </recommendedName>
</protein>
<comment type="function">
    <text evidence="1">Master enzyme that delivers sulfur to a number of partners involved in Fe-S cluster assembly, tRNA modification or cofactor biosynthesis. Catalyzes the removal of elemental sulfur atoms from cysteine to produce alanine. Functions as a sulfur delivery protein for Fe-S cluster synthesis onto IscU, an Fe-S scaffold assembly protein, as well as other S acceptor proteins.</text>
</comment>
<comment type="catalytic activity">
    <reaction evidence="1">
        <text>(sulfur carrier)-H + L-cysteine = (sulfur carrier)-SH + L-alanine</text>
        <dbReference type="Rhea" id="RHEA:43892"/>
        <dbReference type="Rhea" id="RHEA-COMP:14737"/>
        <dbReference type="Rhea" id="RHEA-COMP:14739"/>
        <dbReference type="ChEBI" id="CHEBI:29917"/>
        <dbReference type="ChEBI" id="CHEBI:35235"/>
        <dbReference type="ChEBI" id="CHEBI:57972"/>
        <dbReference type="ChEBI" id="CHEBI:64428"/>
        <dbReference type="EC" id="2.8.1.7"/>
    </reaction>
</comment>
<comment type="cofactor">
    <cofactor evidence="1">
        <name>pyridoxal 5'-phosphate</name>
        <dbReference type="ChEBI" id="CHEBI:597326"/>
    </cofactor>
</comment>
<comment type="pathway">
    <text evidence="1">Cofactor biosynthesis; iron-sulfur cluster biosynthesis.</text>
</comment>
<comment type="subunit">
    <text evidence="1">Homodimer. Forms a heterotetramer with IscU, interacts with other sulfur acceptors.</text>
</comment>
<comment type="subcellular location">
    <subcellularLocation>
        <location evidence="1">Cytoplasm</location>
    </subcellularLocation>
</comment>
<comment type="similarity">
    <text evidence="1">Belongs to the class-V pyridoxal-phosphate-dependent aminotransferase family. NifS/IscS subfamily.</text>
</comment>
<reference key="1">
    <citation type="submission" date="2007-08" db="EMBL/GenBank/DDBJ databases">
        <title>Complete sequence of Shewanella sediminis HAW-EB3.</title>
        <authorList>
            <consortium name="US DOE Joint Genome Institute"/>
            <person name="Copeland A."/>
            <person name="Lucas S."/>
            <person name="Lapidus A."/>
            <person name="Barry K."/>
            <person name="Glavina del Rio T."/>
            <person name="Dalin E."/>
            <person name="Tice H."/>
            <person name="Pitluck S."/>
            <person name="Chertkov O."/>
            <person name="Brettin T."/>
            <person name="Bruce D."/>
            <person name="Detter J.C."/>
            <person name="Han C."/>
            <person name="Schmutz J."/>
            <person name="Larimer F."/>
            <person name="Land M."/>
            <person name="Hauser L."/>
            <person name="Kyrpides N."/>
            <person name="Kim E."/>
            <person name="Zhao J.-S."/>
            <person name="Richardson P."/>
        </authorList>
    </citation>
    <scope>NUCLEOTIDE SEQUENCE [LARGE SCALE GENOMIC DNA]</scope>
    <source>
        <strain>HAW-EB3</strain>
    </source>
</reference>
<sequence length="404" mass="44692">MKLPIYLDYAATTPVDPRVAEKMMQCMTMDGIFGNPASRSHRYGWQAEEAVDIARNQVAELINADPREIVFTSGATESDNLAIKGVAHFYHKKGKHIITSKTEHKAVLDTCRQLEREGFEVTYLAPESNGLIPLETIEAAMREDTILVSIMHVNNEIGVIHDISAIGELCRSKKIIFHVDAAQSAGKLPIDVQSMKVDLISISAHKMYGPKGIGALYVRRKPRIRLEATMHGGGHERGMRSGTLATHQIVGMGEAAAIAKADMTTDNARIRTLRDRLWNGVKGIEETYINGDFEQSYCGSLNVSFNFVEGESLMMALKDLAVSSGSACTSASLEPSYVLRALGLNDEMAHSSIRFSIGRFTTEEEIDHAIETINKSIGDLREMSPLWEMFQDGVDLDKVQWAHH</sequence>
<proteinExistence type="inferred from homology"/>
<dbReference type="EC" id="2.8.1.7" evidence="1"/>
<dbReference type="EMBL" id="CP000821">
    <property type="protein sequence ID" value="ABV37478.1"/>
    <property type="molecule type" value="Genomic_DNA"/>
</dbReference>
<dbReference type="RefSeq" id="WP_012143208.1">
    <property type="nucleotide sequence ID" value="NC_009831.1"/>
</dbReference>
<dbReference type="SMR" id="A8FXA5"/>
<dbReference type="STRING" id="425104.Ssed_2871"/>
<dbReference type="KEGG" id="sse:Ssed_2871"/>
<dbReference type="eggNOG" id="COG1104">
    <property type="taxonomic scope" value="Bacteria"/>
</dbReference>
<dbReference type="HOGENOM" id="CLU_003433_0_2_6"/>
<dbReference type="OrthoDB" id="9808002at2"/>
<dbReference type="UniPathway" id="UPA00266"/>
<dbReference type="Proteomes" id="UP000002015">
    <property type="component" value="Chromosome"/>
</dbReference>
<dbReference type="GO" id="GO:1990221">
    <property type="term" value="C:L-cysteine desulfurase complex"/>
    <property type="evidence" value="ECO:0007669"/>
    <property type="project" value="UniProtKB-ARBA"/>
</dbReference>
<dbReference type="GO" id="GO:0051537">
    <property type="term" value="F:2 iron, 2 sulfur cluster binding"/>
    <property type="evidence" value="ECO:0007669"/>
    <property type="project" value="UniProtKB-UniRule"/>
</dbReference>
<dbReference type="GO" id="GO:0031071">
    <property type="term" value="F:cysteine desulfurase activity"/>
    <property type="evidence" value="ECO:0007669"/>
    <property type="project" value="UniProtKB-UniRule"/>
</dbReference>
<dbReference type="GO" id="GO:0046872">
    <property type="term" value="F:metal ion binding"/>
    <property type="evidence" value="ECO:0007669"/>
    <property type="project" value="UniProtKB-KW"/>
</dbReference>
<dbReference type="GO" id="GO:0030170">
    <property type="term" value="F:pyridoxal phosphate binding"/>
    <property type="evidence" value="ECO:0007669"/>
    <property type="project" value="UniProtKB-UniRule"/>
</dbReference>
<dbReference type="GO" id="GO:0044571">
    <property type="term" value="P:[2Fe-2S] cluster assembly"/>
    <property type="evidence" value="ECO:0007669"/>
    <property type="project" value="UniProtKB-UniRule"/>
</dbReference>
<dbReference type="FunFam" id="3.40.640.10:FF:000003">
    <property type="entry name" value="Cysteine desulfurase IscS"/>
    <property type="match status" value="1"/>
</dbReference>
<dbReference type="FunFam" id="3.90.1150.10:FF:000002">
    <property type="entry name" value="Cysteine desulfurase IscS"/>
    <property type="match status" value="1"/>
</dbReference>
<dbReference type="Gene3D" id="3.90.1150.10">
    <property type="entry name" value="Aspartate Aminotransferase, domain 1"/>
    <property type="match status" value="1"/>
</dbReference>
<dbReference type="Gene3D" id="3.40.640.10">
    <property type="entry name" value="Type I PLP-dependent aspartate aminotransferase-like (Major domain)"/>
    <property type="match status" value="1"/>
</dbReference>
<dbReference type="HAMAP" id="MF_00331">
    <property type="entry name" value="Cys_desulf_IscS"/>
    <property type="match status" value="1"/>
</dbReference>
<dbReference type="InterPro" id="IPR000192">
    <property type="entry name" value="Aminotrans_V_dom"/>
</dbReference>
<dbReference type="InterPro" id="IPR020578">
    <property type="entry name" value="Aminotrans_V_PyrdxlP_BS"/>
</dbReference>
<dbReference type="InterPro" id="IPR010240">
    <property type="entry name" value="Cys_deSase_IscS"/>
</dbReference>
<dbReference type="InterPro" id="IPR016454">
    <property type="entry name" value="Cysteine_dSase"/>
</dbReference>
<dbReference type="InterPro" id="IPR015424">
    <property type="entry name" value="PyrdxlP-dep_Trfase"/>
</dbReference>
<dbReference type="InterPro" id="IPR015421">
    <property type="entry name" value="PyrdxlP-dep_Trfase_major"/>
</dbReference>
<dbReference type="InterPro" id="IPR015422">
    <property type="entry name" value="PyrdxlP-dep_Trfase_small"/>
</dbReference>
<dbReference type="NCBIfam" id="TIGR02006">
    <property type="entry name" value="IscS"/>
    <property type="match status" value="1"/>
</dbReference>
<dbReference type="NCBIfam" id="NF002806">
    <property type="entry name" value="PRK02948.1"/>
    <property type="match status" value="1"/>
</dbReference>
<dbReference type="NCBIfam" id="NF010611">
    <property type="entry name" value="PRK14012.1"/>
    <property type="match status" value="1"/>
</dbReference>
<dbReference type="PANTHER" id="PTHR11601:SF34">
    <property type="entry name" value="CYSTEINE DESULFURASE"/>
    <property type="match status" value="1"/>
</dbReference>
<dbReference type="PANTHER" id="PTHR11601">
    <property type="entry name" value="CYSTEINE DESULFURYLASE FAMILY MEMBER"/>
    <property type="match status" value="1"/>
</dbReference>
<dbReference type="Pfam" id="PF00266">
    <property type="entry name" value="Aminotran_5"/>
    <property type="match status" value="1"/>
</dbReference>
<dbReference type="PIRSF" id="PIRSF005572">
    <property type="entry name" value="NifS"/>
    <property type="match status" value="1"/>
</dbReference>
<dbReference type="SUPFAM" id="SSF53383">
    <property type="entry name" value="PLP-dependent transferases"/>
    <property type="match status" value="1"/>
</dbReference>
<dbReference type="PROSITE" id="PS00595">
    <property type="entry name" value="AA_TRANSFER_CLASS_5"/>
    <property type="match status" value="1"/>
</dbReference>